<protein>
    <recommendedName>
        <fullName evidence="3">Periviscerokinin-2</fullName>
        <shortName evidence="3">ErgCa-PVK-2</shortName>
    </recommendedName>
</protein>
<evidence type="ECO:0000255" key="1"/>
<evidence type="ECO:0000269" key="2">
    <source>
    </source>
</evidence>
<evidence type="ECO:0000303" key="3">
    <source>
    </source>
</evidence>
<evidence type="ECO:0000305" key="4"/>
<dbReference type="GO" id="GO:0005576">
    <property type="term" value="C:extracellular region"/>
    <property type="evidence" value="ECO:0007669"/>
    <property type="project" value="UniProtKB-SubCell"/>
</dbReference>
<dbReference type="GO" id="GO:0007218">
    <property type="term" value="P:neuropeptide signaling pathway"/>
    <property type="evidence" value="ECO:0007669"/>
    <property type="project" value="UniProtKB-KW"/>
</dbReference>
<dbReference type="InterPro" id="IPR013231">
    <property type="entry name" value="Periviscerokinin"/>
</dbReference>
<dbReference type="Pfam" id="PF08259">
    <property type="entry name" value="Periviscerokin"/>
    <property type="match status" value="1"/>
</dbReference>
<organism>
    <name type="scientific">Ergaula capucina</name>
    <name type="common">Beetle roach</name>
    <dbReference type="NCBI Taxonomy" id="76901"/>
    <lineage>
        <taxon>Eukaryota</taxon>
        <taxon>Metazoa</taxon>
        <taxon>Ecdysozoa</taxon>
        <taxon>Arthropoda</taxon>
        <taxon>Hexapoda</taxon>
        <taxon>Insecta</taxon>
        <taxon>Pterygota</taxon>
        <taxon>Neoptera</taxon>
        <taxon>Polyneoptera</taxon>
        <taxon>Dictyoptera</taxon>
        <taxon>Blattodea</taxon>
        <taxon>Corydioidea</taxon>
        <taxon>Corydiidae</taxon>
        <taxon>Ergaula</taxon>
    </lineage>
</organism>
<sequence length="11" mass="1103">GSSGLISMPRV</sequence>
<reference evidence="4" key="1">
    <citation type="journal article" date="2009" name="BMC Evol. Biol.">
        <title>A proteomic approach for studying insect phylogeny: CAPA peptides of ancient insect taxa (Dictyoptera, Blattoptera) as a test case.</title>
        <authorList>
            <person name="Roth S."/>
            <person name="Fromm B."/>
            <person name="Gaede G."/>
            <person name="Predel R."/>
        </authorList>
    </citation>
    <scope>PROTEIN SEQUENCE</scope>
    <scope>AMIDATION AT VAL-11</scope>
    <source>
        <tissue evidence="2">Abdominal perisympathetic organs</tissue>
    </source>
</reference>
<feature type="peptide" id="PRO_0000378786" description="Periviscerokinin-2" evidence="2">
    <location>
        <begin position="1"/>
        <end position="11"/>
    </location>
</feature>
<feature type="modified residue" description="Valine amide" evidence="2">
    <location>
        <position position="11"/>
    </location>
</feature>
<proteinExistence type="evidence at protein level"/>
<accession>P85609</accession>
<keyword id="KW-0027">Amidation</keyword>
<keyword id="KW-0903">Direct protein sequencing</keyword>
<keyword id="KW-0527">Neuropeptide</keyword>
<keyword id="KW-0964">Secreted</keyword>
<comment type="function">
    <text evidence="4">Mediates visceral muscle contractile activity (myotropic activity).</text>
</comment>
<comment type="subcellular location">
    <subcellularLocation>
        <location evidence="4">Secreted</location>
    </subcellularLocation>
</comment>
<comment type="similarity">
    <text evidence="1">Belongs to the periviscerokinin family.</text>
</comment>
<name>PVK2_ERGCA</name>